<comment type="function">
    <text evidence="1">Catalyzes the phosphorylation of D-fructose 6-phosphate to fructose 1,6-bisphosphate by ATP, the first committing step of glycolysis.</text>
</comment>
<comment type="catalytic activity">
    <reaction evidence="1">
        <text>beta-D-fructose 6-phosphate + ATP = beta-D-fructose 1,6-bisphosphate + ADP + H(+)</text>
        <dbReference type="Rhea" id="RHEA:16109"/>
        <dbReference type="ChEBI" id="CHEBI:15378"/>
        <dbReference type="ChEBI" id="CHEBI:30616"/>
        <dbReference type="ChEBI" id="CHEBI:32966"/>
        <dbReference type="ChEBI" id="CHEBI:57634"/>
        <dbReference type="ChEBI" id="CHEBI:456216"/>
        <dbReference type="EC" id="2.7.1.11"/>
    </reaction>
</comment>
<comment type="cofactor">
    <cofactor evidence="1">
        <name>Mg(2+)</name>
        <dbReference type="ChEBI" id="CHEBI:18420"/>
    </cofactor>
</comment>
<comment type="activity regulation">
    <text evidence="1">Allosterically activated by ADP and other diphosphonucleosides, and allosterically inhibited by phosphoenolpyruvate.</text>
</comment>
<comment type="pathway">
    <text evidence="1">Carbohydrate degradation; glycolysis; D-glyceraldehyde 3-phosphate and glycerone phosphate from D-glucose: step 3/4.</text>
</comment>
<comment type="subunit">
    <text evidence="1">Homotetramer.</text>
</comment>
<comment type="subcellular location">
    <subcellularLocation>
        <location evidence="1">Cytoplasm</location>
    </subcellularLocation>
</comment>
<comment type="similarity">
    <text evidence="1">Belongs to the phosphofructokinase type A (PFKA) family. ATP-dependent PFK group I subfamily. Prokaryotic clade 'B1' sub-subfamily.</text>
</comment>
<accession>Q1C297</accession>
<reference key="1">
    <citation type="journal article" date="2006" name="J. Bacteriol.">
        <title>Complete genome sequence of Yersinia pestis strains Antiqua and Nepal516: evidence of gene reduction in an emerging pathogen.</title>
        <authorList>
            <person name="Chain P.S.G."/>
            <person name="Hu P."/>
            <person name="Malfatti S.A."/>
            <person name="Radnedge L."/>
            <person name="Larimer F."/>
            <person name="Vergez L.M."/>
            <person name="Worsham P."/>
            <person name="Chu M.C."/>
            <person name="Andersen G.L."/>
        </authorList>
    </citation>
    <scope>NUCLEOTIDE SEQUENCE [LARGE SCALE GENOMIC DNA]</scope>
    <source>
        <strain>Antiqua</strain>
    </source>
</reference>
<proteinExistence type="inferred from homology"/>
<organism>
    <name type="scientific">Yersinia pestis bv. Antiqua (strain Antiqua)</name>
    <dbReference type="NCBI Taxonomy" id="360102"/>
    <lineage>
        <taxon>Bacteria</taxon>
        <taxon>Pseudomonadati</taxon>
        <taxon>Pseudomonadota</taxon>
        <taxon>Gammaproteobacteria</taxon>
        <taxon>Enterobacterales</taxon>
        <taxon>Yersiniaceae</taxon>
        <taxon>Yersinia</taxon>
    </lineage>
</organism>
<feature type="chain" id="PRO_1000059812" description="ATP-dependent 6-phosphofructokinase">
    <location>
        <begin position="1"/>
        <end position="327"/>
    </location>
</feature>
<feature type="active site" description="Proton acceptor" evidence="1">
    <location>
        <position position="129"/>
    </location>
</feature>
<feature type="binding site" evidence="1">
    <location>
        <position position="12"/>
    </location>
    <ligand>
        <name>ATP</name>
        <dbReference type="ChEBI" id="CHEBI:30616"/>
    </ligand>
</feature>
<feature type="binding site" evidence="1">
    <location>
        <begin position="22"/>
        <end position="26"/>
    </location>
    <ligand>
        <name>ADP</name>
        <dbReference type="ChEBI" id="CHEBI:456216"/>
        <note>allosteric activator; ligand shared between dimeric partners</note>
    </ligand>
</feature>
<feature type="binding site" evidence="1">
    <location>
        <begin position="55"/>
        <end position="60"/>
    </location>
    <ligand>
        <name>ADP</name>
        <dbReference type="ChEBI" id="CHEBI:456216"/>
        <note>allosteric activator; ligand shared between dimeric partners</note>
    </ligand>
</feature>
<feature type="binding site" evidence="1">
    <location>
        <begin position="73"/>
        <end position="74"/>
    </location>
    <ligand>
        <name>ATP</name>
        <dbReference type="ChEBI" id="CHEBI:30616"/>
    </ligand>
</feature>
<feature type="binding site" evidence="1">
    <location>
        <begin position="103"/>
        <end position="106"/>
    </location>
    <ligand>
        <name>ATP</name>
        <dbReference type="ChEBI" id="CHEBI:30616"/>
    </ligand>
</feature>
<feature type="binding site" evidence="1">
    <location>
        <position position="104"/>
    </location>
    <ligand>
        <name>Mg(2+)</name>
        <dbReference type="ChEBI" id="CHEBI:18420"/>
        <note>catalytic</note>
    </ligand>
</feature>
<feature type="binding site" description="in other chain" evidence="1">
    <location>
        <begin position="127"/>
        <end position="129"/>
    </location>
    <ligand>
        <name>substrate</name>
        <note>ligand shared between dimeric partners</note>
    </ligand>
</feature>
<feature type="binding site" description="in other chain" evidence="1">
    <location>
        <position position="156"/>
    </location>
    <ligand>
        <name>ADP</name>
        <dbReference type="ChEBI" id="CHEBI:456216"/>
        <note>allosteric activator; ligand shared between dimeric partners</note>
    </ligand>
</feature>
<feature type="binding site" evidence="1">
    <location>
        <position position="164"/>
    </location>
    <ligand>
        <name>substrate</name>
        <note>ligand shared between dimeric partners</note>
    </ligand>
</feature>
<feature type="binding site" description="in other chain" evidence="1">
    <location>
        <begin position="171"/>
        <end position="173"/>
    </location>
    <ligand>
        <name>substrate</name>
        <note>ligand shared between dimeric partners</note>
    </ligand>
</feature>
<feature type="binding site" description="in other chain" evidence="1">
    <location>
        <begin position="187"/>
        <end position="189"/>
    </location>
    <ligand>
        <name>ADP</name>
        <dbReference type="ChEBI" id="CHEBI:456216"/>
        <note>allosteric activator; ligand shared between dimeric partners</note>
    </ligand>
</feature>
<feature type="binding site" description="in other chain" evidence="1">
    <location>
        <position position="213"/>
    </location>
    <ligand>
        <name>ADP</name>
        <dbReference type="ChEBI" id="CHEBI:456216"/>
        <note>allosteric activator; ligand shared between dimeric partners</note>
    </ligand>
</feature>
<feature type="binding site" description="in other chain" evidence="1">
    <location>
        <begin position="215"/>
        <end position="217"/>
    </location>
    <ligand>
        <name>ADP</name>
        <dbReference type="ChEBI" id="CHEBI:456216"/>
        <note>allosteric activator; ligand shared between dimeric partners</note>
    </ligand>
</feature>
<feature type="binding site" description="in other chain" evidence="1">
    <location>
        <position position="224"/>
    </location>
    <ligand>
        <name>substrate</name>
        <note>ligand shared between dimeric partners</note>
    </ligand>
</feature>
<feature type="binding site" evidence="1">
    <location>
        <position position="245"/>
    </location>
    <ligand>
        <name>substrate</name>
        <note>ligand shared between dimeric partners</note>
    </ligand>
</feature>
<feature type="binding site" description="in other chain" evidence="1">
    <location>
        <begin position="251"/>
        <end position="254"/>
    </location>
    <ligand>
        <name>substrate</name>
        <note>ligand shared between dimeric partners</note>
    </ligand>
</feature>
<protein>
    <recommendedName>
        <fullName evidence="1">ATP-dependent 6-phosphofructokinase</fullName>
        <shortName evidence="1">ATP-PFK</shortName>
        <shortName evidence="1">Phosphofructokinase</shortName>
        <ecNumber evidence="1">2.7.1.11</ecNumber>
    </recommendedName>
    <alternativeName>
        <fullName evidence="1">Phosphohexokinase</fullName>
    </alternativeName>
</protein>
<gene>
    <name evidence="1" type="primary">pfkA</name>
    <name type="ordered locus">YPA_3463</name>
</gene>
<sequence length="327" mass="35395">MVKKIGVLTSGGDAPGMNAAIRGVVRAALSAGLDVFGIEDGYLGLYENRMKKLDRYSVSDMINRGGTFLGSARFPEFRDPEVRKVALKNMHERGIDGLVVIGGDGSYAGADLLTKEGGIHCVGLPGTIDNDVAGTDYTIGFFTALETVVEAIDRLRDTSSSHQRISIVEVMGRYCGDLTLAAAIAGGCEFIAIPEVEFKRDDLVAEIKAGIAKGKKHAIVAITEKLDDIDSLAKYIEKETGRETRGTVLGHIQRGGAPVAYDRILASRMGAYAVDLLLQDHDYKKGGFCVGVQNEKMVHELISVCIAPENKKSKFKEDWYDTAKKLF</sequence>
<keyword id="KW-0021">Allosteric enzyme</keyword>
<keyword id="KW-0067">ATP-binding</keyword>
<keyword id="KW-0963">Cytoplasm</keyword>
<keyword id="KW-0324">Glycolysis</keyword>
<keyword id="KW-0418">Kinase</keyword>
<keyword id="KW-0460">Magnesium</keyword>
<keyword id="KW-0479">Metal-binding</keyword>
<keyword id="KW-0547">Nucleotide-binding</keyword>
<keyword id="KW-0808">Transferase</keyword>
<dbReference type="EC" id="2.7.1.11" evidence="1"/>
<dbReference type="EMBL" id="CP000308">
    <property type="protein sequence ID" value="ABG15425.1"/>
    <property type="molecule type" value="Genomic_DNA"/>
</dbReference>
<dbReference type="RefSeq" id="WP_002208966.1">
    <property type="nucleotide sequence ID" value="NZ_CP009906.1"/>
</dbReference>
<dbReference type="SMR" id="Q1C297"/>
<dbReference type="GeneID" id="57974514"/>
<dbReference type="KEGG" id="ypa:YPA_3463"/>
<dbReference type="UniPathway" id="UPA00109">
    <property type="reaction ID" value="UER00182"/>
</dbReference>
<dbReference type="Proteomes" id="UP000001971">
    <property type="component" value="Chromosome"/>
</dbReference>
<dbReference type="GO" id="GO:0005945">
    <property type="term" value="C:6-phosphofructokinase complex"/>
    <property type="evidence" value="ECO:0007669"/>
    <property type="project" value="TreeGrafter"/>
</dbReference>
<dbReference type="GO" id="GO:0003872">
    <property type="term" value="F:6-phosphofructokinase activity"/>
    <property type="evidence" value="ECO:0007669"/>
    <property type="project" value="UniProtKB-UniRule"/>
</dbReference>
<dbReference type="GO" id="GO:0016208">
    <property type="term" value="F:AMP binding"/>
    <property type="evidence" value="ECO:0007669"/>
    <property type="project" value="TreeGrafter"/>
</dbReference>
<dbReference type="GO" id="GO:0005524">
    <property type="term" value="F:ATP binding"/>
    <property type="evidence" value="ECO:0007669"/>
    <property type="project" value="UniProtKB-KW"/>
</dbReference>
<dbReference type="GO" id="GO:0070095">
    <property type="term" value="F:fructose-6-phosphate binding"/>
    <property type="evidence" value="ECO:0007669"/>
    <property type="project" value="TreeGrafter"/>
</dbReference>
<dbReference type="GO" id="GO:0042802">
    <property type="term" value="F:identical protein binding"/>
    <property type="evidence" value="ECO:0007669"/>
    <property type="project" value="TreeGrafter"/>
</dbReference>
<dbReference type="GO" id="GO:0046872">
    <property type="term" value="F:metal ion binding"/>
    <property type="evidence" value="ECO:0007669"/>
    <property type="project" value="UniProtKB-KW"/>
</dbReference>
<dbReference type="GO" id="GO:0048029">
    <property type="term" value="F:monosaccharide binding"/>
    <property type="evidence" value="ECO:0007669"/>
    <property type="project" value="TreeGrafter"/>
</dbReference>
<dbReference type="GO" id="GO:0061621">
    <property type="term" value="P:canonical glycolysis"/>
    <property type="evidence" value="ECO:0007669"/>
    <property type="project" value="TreeGrafter"/>
</dbReference>
<dbReference type="GO" id="GO:0030388">
    <property type="term" value="P:fructose 1,6-bisphosphate metabolic process"/>
    <property type="evidence" value="ECO:0007669"/>
    <property type="project" value="TreeGrafter"/>
</dbReference>
<dbReference type="GO" id="GO:0006002">
    <property type="term" value="P:fructose 6-phosphate metabolic process"/>
    <property type="evidence" value="ECO:0007669"/>
    <property type="project" value="InterPro"/>
</dbReference>
<dbReference type="FunFam" id="3.40.50.450:FF:000001">
    <property type="entry name" value="ATP-dependent 6-phosphofructokinase"/>
    <property type="match status" value="1"/>
</dbReference>
<dbReference type="FunFam" id="3.40.50.460:FF:000002">
    <property type="entry name" value="ATP-dependent 6-phosphofructokinase"/>
    <property type="match status" value="1"/>
</dbReference>
<dbReference type="Gene3D" id="3.40.50.450">
    <property type="match status" value="1"/>
</dbReference>
<dbReference type="Gene3D" id="3.40.50.460">
    <property type="entry name" value="Phosphofructokinase domain"/>
    <property type="match status" value="1"/>
</dbReference>
<dbReference type="HAMAP" id="MF_00339">
    <property type="entry name" value="Phosphofructokinase_I_B1"/>
    <property type="match status" value="1"/>
</dbReference>
<dbReference type="InterPro" id="IPR022953">
    <property type="entry name" value="ATP_PFK"/>
</dbReference>
<dbReference type="InterPro" id="IPR012003">
    <property type="entry name" value="ATP_PFK_prok-type"/>
</dbReference>
<dbReference type="InterPro" id="IPR012828">
    <property type="entry name" value="PFKA_ATP_prok"/>
</dbReference>
<dbReference type="InterPro" id="IPR015912">
    <property type="entry name" value="Phosphofructokinase_CS"/>
</dbReference>
<dbReference type="InterPro" id="IPR000023">
    <property type="entry name" value="Phosphofructokinase_dom"/>
</dbReference>
<dbReference type="InterPro" id="IPR035966">
    <property type="entry name" value="PKF_sf"/>
</dbReference>
<dbReference type="NCBIfam" id="TIGR02482">
    <property type="entry name" value="PFKA_ATP"/>
    <property type="match status" value="1"/>
</dbReference>
<dbReference type="NCBIfam" id="NF002872">
    <property type="entry name" value="PRK03202.1"/>
    <property type="match status" value="1"/>
</dbReference>
<dbReference type="PANTHER" id="PTHR13697:SF4">
    <property type="entry name" value="ATP-DEPENDENT 6-PHOSPHOFRUCTOKINASE"/>
    <property type="match status" value="1"/>
</dbReference>
<dbReference type="PANTHER" id="PTHR13697">
    <property type="entry name" value="PHOSPHOFRUCTOKINASE"/>
    <property type="match status" value="1"/>
</dbReference>
<dbReference type="Pfam" id="PF00365">
    <property type="entry name" value="PFK"/>
    <property type="match status" value="1"/>
</dbReference>
<dbReference type="PIRSF" id="PIRSF000532">
    <property type="entry name" value="ATP_PFK_prok"/>
    <property type="match status" value="1"/>
</dbReference>
<dbReference type="PRINTS" id="PR00476">
    <property type="entry name" value="PHFRCTKINASE"/>
</dbReference>
<dbReference type="SUPFAM" id="SSF53784">
    <property type="entry name" value="Phosphofructokinase"/>
    <property type="match status" value="1"/>
</dbReference>
<dbReference type="PROSITE" id="PS00433">
    <property type="entry name" value="PHOSPHOFRUCTOKINASE"/>
    <property type="match status" value="1"/>
</dbReference>
<evidence type="ECO:0000255" key="1">
    <source>
        <dbReference type="HAMAP-Rule" id="MF_00339"/>
    </source>
</evidence>
<name>PFKA_YERPA</name>